<sequence>MVGKIAPVAVDAMGGDHAPGAIVQGAINAARKGLPILLVGPEARLRDELARHRAGHALPIEVHHAGEVVEMDDHPGQAMRRKRDNSIRVCFELVKSGRASAMVSAGNSGAVMAGAIFVLGRPEGVERPAIISVLPALKGSSILLDMGAVVDCKPIHLVQFALMGEVYARRVVGVARPKVAILANGEEESKGTDLTRAAAAALRHAPLQFVGYCEGRDLLTGEVDVIVTDGFTGNVALKTMEGTAKVVGEYLKRALRSTAVSAIGGMLSKAALDGMKKRLDWREVGGAPLVGVNGVGFISHGRSDAIAIENAIHRARDAARAHFVDEIARAVAPSEALLEGAAGRAARPPPPRRASSHDA</sequence>
<dbReference type="EC" id="2.3.1.274" evidence="1"/>
<dbReference type="EMBL" id="CP000769">
    <property type="protein sequence ID" value="ABS26941.1"/>
    <property type="molecule type" value="Genomic_DNA"/>
</dbReference>
<dbReference type="RefSeq" id="WP_012097543.1">
    <property type="nucleotide sequence ID" value="NC_009675.1"/>
</dbReference>
<dbReference type="SMR" id="A7HDZ5"/>
<dbReference type="STRING" id="404589.Anae109_2740"/>
<dbReference type="KEGG" id="afw:Anae109_2740"/>
<dbReference type="eggNOG" id="COG0416">
    <property type="taxonomic scope" value="Bacteria"/>
</dbReference>
<dbReference type="HOGENOM" id="CLU_039379_1_1_7"/>
<dbReference type="OrthoDB" id="9806408at2"/>
<dbReference type="UniPathway" id="UPA00085"/>
<dbReference type="Proteomes" id="UP000006382">
    <property type="component" value="Chromosome"/>
</dbReference>
<dbReference type="GO" id="GO:0005737">
    <property type="term" value="C:cytoplasm"/>
    <property type="evidence" value="ECO:0007669"/>
    <property type="project" value="UniProtKB-SubCell"/>
</dbReference>
<dbReference type="GO" id="GO:0043811">
    <property type="term" value="F:phosphate:acyl-[acyl carrier protein] acyltransferase activity"/>
    <property type="evidence" value="ECO:0007669"/>
    <property type="project" value="UniProtKB-UniRule"/>
</dbReference>
<dbReference type="GO" id="GO:0006633">
    <property type="term" value="P:fatty acid biosynthetic process"/>
    <property type="evidence" value="ECO:0007669"/>
    <property type="project" value="UniProtKB-UniRule"/>
</dbReference>
<dbReference type="GO" id="GO:0008654">
    <property type="term" value="P:phospholipid biosynthetic process"/>
    <property type="evidence" value="ECO:0007669"/>
    <property type="project" value="UniProtKB-KW"/>
</dbReference>
<dbReference type="Gene3D" id="3.40.718.10">
    <property type="entry name" value="Isopropylmalate Dehydrogenase"/>
    <property type="match status" value="1"/>
</dbReference>
<dbReference type="HAMAP" id="MF_00019">
    <property type="entry name" value="PlsX"/>
    <property type="match status" value="1"/>
</dbReference>
<dbReference type="InterPro" id="IPR003664">
    <property type="entry name" value="FA_synthesis"/>
</dbReference>
<dbReference type="InterPro" id="IPR012281">
    <property type="entry name" value="Phospholipid_synth_PlsX-like"/>
</dbReference>
<dbReference type="NCBIfam" id="TIGR00182">
    <property type="entry name" value="plsX"/>
    <property type="match status" value="1"/>
</dbReference>
<dbReference type="PANTHER" id="PTHR30100">
    <property type="entry name" value="FATTY ACID/PHOSPHOLIPID SYNTHESIS PROTEIN PLSX"/>
    <property type="match status" value="1"/>
</dbReference>
<dbReference type="PANTHER" id="PTHR30100:SF1">
    <property type="entry name" value="PHOSPHATE ACYLTRANSFERASE"/>
    <property type="match status" value="1"/>
</dbReference>
<dbReference type="Pfam" id="PF02504">
    <property type="entry name" value="FA_synthesis"/>
    <property type="match status" value="1"/>
</dbReference>
<dbReference type="PIRSF" id="PIRSF002465">
    <property type="entry name" value="Phsphlp_syn_PlsX"/>
    <property type="match status" value="1"/>
</dbReference>
<dbReference type="SUPFAM" id="SSF53659">
    <property type="entry name" value="Isocitrate/Isopropylmalate dehydrogenase-like"/>
    <property type="match status" value="1"/>
</dbReference>
<gene>
    <name evidence="1" type="primary">plsX</name>
    <name type="ordered locus">Anae109_2740</name>
</gene>
<evidence type="ECO:0000255" key="1">
    <source>
        <dbReference type="HAMAP-Rule" id="MF_00019"/>
    </source>
</evidence>
<evidence type="ECO:0000256" key="2">
    <source>
        <dbReference type="SAM" id="MobiDB-lite"/>
    </source>
</evidence>
<protein>
    <recommendedName>
        <fullName evidence="1">Phosphate acyltransferase</fullName>
        <ecNumber evidence="1">2.3.1.274</ecNumber>
    </recommendedName>
    <alternativeName>
        <fullName evidence="1">Acyl-ACP phosphotransacylase</fullName>
    </alternativeName>
    <alternativeName>
        <fullName evidence="1">Acyl-[acyl-carrier-protein]--phosphate acyltransferase</fullName>
    </alternativeName>
    <alternativeName>
        <fullName evidence="1">Phosphate-acyl-ACP acyltransferase</fullName>
    </alternativeName>
</protein>
<reference key="1">
    <citation type="journal article" date="2015" name="Genome Announc.">
        <title>Complete genome sequence of Anaeromyxobacter sp. Fw109-5, an anaerobic, metal-reducing bacterium isolated from a contaminated subsurface environment.</title>
        <authorList>
            <person name="Hwang C."/>
            <person name="Copeland A."/>
            <person name="Lucas S."/>
            <person name="Lapidus A."/>
            <person name="Barry K."/>
            <person name="Glavina Del Rio T."/>
            <person name="Dalin E."/>
            <person name="Tice H."/>
            <person name="Pitluck S."/>
            <person name="Sims D."/>
            <person name="Brettin T."/>
            <person name="Bruce D.C."/>
            <person name="Detter J.C."/>
            <person name="Han C.S."/>
            <person name="Schmutz J."/>
            <person name="Larimer F.W."/>
            <person name="Land M.L."/>
            <person name="Hauser L.J."/>
            <person name="Kyrpides N."/>
            <person name="Lykidis A."/>
            <person name="Richardson P."/>
            <person name="Belieav A."/>
            <person name="Sanford R.A."/>
            <person name="Loeffler F.E."/>
            <person name="Fields M.W."/>
        </authorList>
    </citation>
    <scope>NUCLEOTIDE SEQUENCE [LARGE SCALE GENOMIC DNA]</scope>
    <source>
        <strain>Fw109-5</strain>
    </source>
</reference>
<name>PLSX_ANADF</name>
<organism>
    <name type="scientific">Anaeromyxobacter sp. (strain Fw109-5)</name>
    <dbReference type="NCBI Taxonomy" id="404589"/>
    <lineage>
        <taxon>Bacteria</taxon>
        <taxon>Pseudomonadati</taxon>
        <taxon>Myxococcota</taxon>
        <taxon>Myxococcia</taxon>
        <taxon>Myxococcales</taxon>
        <taxon>Cystobacterineae</taxon>
        <taxon>Anaeromyxobacteraceae</taxon>
        <taxon>Anaeromyxobacter</taxon>
    </lineage>
</organism>
<accession>A7HDZ5</accession>
<feature type="chain" id="PRO_0000329209" description="Phosphate acyltransferase">
    <location>
        <begin position="1"/>
        <end position="359"/>
    </location>
</feature>
<feature type="region of interest" description="Disordered" evidence="2">
    <location>
        <begin position="338"/>
        <end position="359"/>
    </location>
</feature>
<keyword id="KW-0963">Cytoplasm</keyword>
<keyword id="KW-0444">Lipid biosynthesis</keyword>
<keyword id="KW-0443">Lipid metabolism</keyword>
<keyword id="KW-0594">Phospholipid biosynthesis</keyword>
<keyword id="KW-1208">Phospholipid metabolism</keyword>
<keyword id="KW-1185">Reference proteome</keyword>
<keyword id="KW-0808">Transferase</keyword>
<comment type="function">
    <text evidence="1">Catalyzes the reversible formation of acyl-phosphate (acyl-PO(4)) from acyl-[acyl-carrier-protein] (acyl-ACP). This enzyme utilizes acyl-ACP as fatty acyl donor, but not acyl-CoA.</text>
</comment>
<comment type="catalytic activity">
    <reaction evidence="1">
        <text>a fatty acyl-[ACP] + phosphate = an acyl phosphate + holo-[ACP]</text>
        <dbReference type="Rhea" id="RHEA:42292"/>
        <dbReference type="Rhea" id="RHEA-COMP:9685"/>
        <dbReference type="Rhea" id="RHEA-COMP:14125"/>
        <dbReference type="ChEBI" id="CHEBI:43474"/>
        <dbReference type="ChEBI" id="CHEBI:59918"/>
        <dbReference type="ChEBI" id="CHEBI:64479"/>
        <dbReference type="ChEBI" id="CHEBI:138651"/>
        <dbReference type="EC" id="2.3.1.274"/>
    </reaction>
</comment>
<comment type="pathway">
    <text evidence="1">Lipid metabolism; phospholipid metabolism.</text>
</comment>
<comment type="subunit">
    <text evidence="1">Homodimer. Probably interacts with PlsY.</text>
</comment>
<comment type="subcellular location">
    <subcellularLocation>
        <location evidence="1">Cytoplasm</location>
    </subcellularLocation>
    <text evidence="1">Associated with the membrane possibly through PlsY.</text>
</comment>
<comment type="similarity">
    <text evidence="1">Belongs to the PlsX family.</text>
</comment>
<proteinExistence type="inferred from homology"/>